<reference key="1">
    <citation type="journal article" date="1994" name="Yeast">
        <title>Analysis of a 70 kb region on the right arm of yeast chromosome II.</title>
        <authorList>
            <person name="Mannhaupt G."/>
            <person name="Stucka R."/>
            <person name="Ehnle S."/>
            <person name="Vetter I."/>
            <person name="Feldmann H."/>
        </authorList>
    </citation>
    <scope>NUCLEOTIDE SEQUENCE [GENOMIC DNA]</scope>
    <source>
        <strain>ATCC 204508 / S288c</strain>
    </source>
</reference>
<reference key="2">
    <citation type="journal article" date="1994" name="EMBO J.">
        <title>Complete DNA sequence of yeast chromosome II.</title>
        <authorList>
            <person name="Feldmann H."/>
            <person name="Aigle M."/>
            <person name="Aljinovic G."/>
            <person name="Andre B."/>
            <person name="Baclet M.C."/>
            <person name="Barthe C."/>
            <person name="Baur A."/>
            <person name="Becam A.-M."/>
            <person name="Biteau N."/>
            <person name="Boles E."/>
            <person name="Brandt T."/>
            <person name="Brendel M."/>
            <person name="Brueckner M."/>
            <person name="Bussereau F."/>
            <person name="Christiansen C."/>
            <person name="Contreras R."/>
            <person name="Crouzet M."/>
            <person name="Cziepluch C."/>
            <person name="Demolis N."/>
            <person name="Delaveau T."/>
            <person name="Doignon F."/>
            <person name="Domdey H."/>
            <person name="Duesterhus S."/>
            <person name="Dubois E."/>
            <person name="Dujon B."/>
            <person name="El Bakkoury M."/>
            <person name="Entian K.-D."/>
            <person name="Feuermann M."/>
            <person name="Fiers W."/>
            <person name="Fobo G.M."/>
            <person name="Fritz C."/>
            <person name="Gassenhuber J."/>
            <person name="Glansdorff N."/>
            <person name="Goffeau A."/>
            <person name="Grivell L.A."/>
            <person name="de Haan M."/>
            <person name="Hein C."/>
            <person name="Herbert C.J."/>
            <person name="Hollenberg C.P."/>
            <person name="Holmstroem K."/>
            <person name="Jacq C."/>
            <person name="Jacquet M."/>
            <person name="Jauniaux J.-C."/>
            <person name="Jonniaux J.-L."/>
            <person name="Kallesoee T."/>
            <person name="Kiesau P."/>
            <person name="Kirchrath L."/>
            <person name="Koetter P."/>
            <person name="Korol S."/>
            <person name="Liebl S."/>
            <person name="Logghe M."/>
            <person name="Lohan A.J.E."/>
            <person name="Louis E.J."/>
            <person name="Li Z.Y."/>
            <person name="Maat M.J."/>
            <person name="Mallet L."/>
            <person name="Mannhaupt G."/>
            <person name="Messenguy F."/>
            <person name="Miosga T."/>
            <person name="Molemans F."/>
            <person name="Mueller S."/>
            <person name="Nasr F."/>
            <person name="Obermaier B."/>
            <person name="Perea J."/>
            <person name="Pierard A."/>
            <person name="Piravandi E."/>
            <person name="Pohl F.M."/>
            <person name="Pohl T.M."/>
            <person name="Potier S."/>
            <person name="Proft M."/>
            <person name="Purnelle B."/>
            <person name="Ramezani Rad M."/>
            <person name="Rieger M."/>
            <person name="Rose M."/>
            <person name="Schaaff-Gerstenschlaeger I."/>
            <person name="Scherens B."/>
            <person name="Schwarzlose C."/>
            <person name="Skala J."/>
            <person name="Slonimski P.P."/>
            <person name="Smits P.H.M."/>
            <person name="Souciet J.-L."/>
            <person name="Steensma H.Y."/>
            <person name="Stucka R."/>
            <person name="Urrestarazu L.A."/>
            <person name="van der Aart Q.J.M."/>
            <person name="Van Dyck L."/>
            <person name="Vassarotti A."/>
            <person name="Vetter I."/>
            <person name="Vierendeels F."/>
            <person name="Vissers S."/>
            <person name="Wagner G."/>
            <person name="de Wergifosse P."/>
            <person name="Wolfe K.H."/>
            <person name="Zagulski M."/>
            <person name="Zimmermann F.K."/>
            <person name="Mewes H.-W."/>
            <person name="Kleine K."/>
        </authorList>
    </citation>
    <scope>NUCLEOTIDE SEQUENCE [LARGE SCALE GENOMIC DNA]</scope>
    <source>
        <strain>ATCC 204508 / S288c</strain>
    </source>
</reference>
<reference key="3">
    <citation type="journal article" date="2014" name="G3 (Bethesda)">
        <title>The reference genome sequence of Saccharomyces cerevisiae: Then and now.</title>
        <authorList>
            <person name="Engel S.R."/>
            <person name="Dietrich F.S."/>
            <person name="Fisk D.G."/>
            <person name="Binkley G."/>
            <person name="Balakrishnan R."/>
            <person name="Costanzo M.C."/>
            <person name="Dwight S.S."/>
            <person name="Hitz B.C."/>
            <person name="Karra K."/>
            <person name="Nash R.S."/>
            <person name="Weng S."/>
            <person name="Wong E.D."/>
            <person name="Lloyd P."/>
            <person name="Skrzypek M.S."/>
            <person name="Miyasato S.R."/>
            <person name="Simison M."/>
            <person name="Cherry J.M."/>
        </authorList>
    </citation>
    <scope>GENOME REANNOTATION</scope>
    <scope>SEQUENCE REVISION TO 30</scope>
    <source>
        <strain>ATCC 204508 / S288c</strain>
    </source>
</reference>
<reference key="4">
    <citation type="journal article" date="2003" name="Nature">
        <title>Global analysis of protein localization in budding yeast.</title>
        <authorList>
            <person name="Huh W.-K."/>
            <person name="Falvo J.V."/>
            <person name="Gerke L.C."/>
            <person name="Carroll A.S."/>
            <person name="Howson R.W."/>
            <person name="Weissman J.S."/>
            <person name="O'Shea E.K."/>
        </authorList>
    </citation>
    <scope>SUBCELLULAR LOCATION [LARGE SCALE ANALYSIS]</scope>
</reference>
<name>YBU0_YEAST</name>
<proteinExistence type="evidence at protein level"/>
<feature type="chain" id="PRO_0000202481" description="Uncharacterized protein YBR090C">
    <location>
        <begin position="1"/>
        <end position="122"/>
    </location>
</feature>
<feature type="transmembrane region" description="Helical" evidence="1">
    <location>
        <begin position="9"/>
        <end position="25"/>
    </location>
</feature>
<feature type="sequence conflict" description="In Ref. 1; X78993 and 2; CAA85043." evidence="3" ref="1 2">
    <original>A</original>
    <variation>G</variation>
    <location>
        <position position="101"/>
    </location>
</feature>
<protein>
    <recommendedName>
        <fullName>Uncharacterized protein YBR090C</fullName>
    </recommendedName>
</protein>
<keyword id="KW-0963">Cytoplasm</keyword>
<keyword id="KW-0472">Membrane</keyword>
<keyword id="KW-0539">Nucleus</keyword>
<keyword id="KW-1185">Reference proteome</keyword>
<keyword id="KW-0812">Transmembrane</keyword>
<keyword id="KW-1133">Transmembrane helix</keyword>
<sequence>MVPAPGSRAFPSPVFLGGVFFVFFFRWRGNYKVQQVRLRQYWEFTLWETAPNTKQKNDFFAKTLTYIKLALWPQLKKQSNQRNQRRGPPGERRILTPLRGACQLICSLLMKTETLSVPRILT</sequence>
<comment type="subcellular location">
    <subcellularLocation>
        <location evidence="2">Cytoplasm</location>
    </subcellularLocation>
    <subcellularLocation>
        <location evidence="2">Nucleus</location>
    </subcellularLocation>
    <subcellularLocation>
        <location evidence="3">Membrane</location>
        <topology evidence="3">Single-pass membrane protein</topology>
    </subcellularLocation>
</comment>
<evidence type="ECO:0000255" key="1"/>
<evidence type="ECO:0000269" key="2">
    <source>
    </source>
</evidence>
<evidence type="ECO:0000305" key="3"/>
<accession>P38253</accession>
<accession>D6VQ91</accession>
<accession>E9PAD2</accession>
<accession>P89502</accession>
<gene>
    <name type="ordered locus">YBR090C</name>
    <name type="ORF">YBR0811B</name>
</gene>
<organism>
    <name type="scientific">Saccharomyces cerevisiae (strain ATCC 204508 / S288c)</name>
    <name type="common">Baker's yeast</name>
    <dbReference type="NCBI Taxonomy" id="559292"/>
    <lineage>
        <taxon>Eukaryota</taxon>
        <taxon>Fungi</taxon>
        <taxon>Dikarya</taxon>
        <taxon>Ascomycota</taxon>
        <taxon>Saccharomycotina</taxon>
        <taxon>Saccharomycetes</taxon>
        <taxon>Saccharomycetales</taxon>
        <taxon>Saccharomycetaceae</taxon>
        <taxon>Saccharomyces</taxon>
    </lineage>
</organism>
<dbReference type="EMBL" id="X78993">
    <property type="status" value="NOT_ANNOTATED_CDS"/>
    <property type="molecule type" value="Genomic_DNA"/>
</dbReference>
<dbReference type="EMBL" id="Z35957">
    <property type="protein sequence ID" value="CAA85041.1"/>
    <property type="molecule type" value="Genomic_DNA"/>
</dbReference>
<dbReference type="EMBL" id="Z35959">
    <property type="protein sequence ID" value="CAA85043.1"/>
    <property type="molecule type" value="Genomic_DNA"/>
</dbReference>
<dbReference type="EMBL" id="BK006936">
    <property type="protein sequence ID" value="DAA07211.2"/>
    <property type="molecule type" value="Genomic_DNA"/>
</dbReference>
<dbReference type="PIR" id="S45958">
    <property type="entry name" value="S45958"/>
</dbReference>
<dbReference type="RefSeq" id="NP_009648.4">
    <property type="nucleotide sequence ID" value="NM_001178438.4"/>
</dbReference>
<dbReference type="BioGRID" id="32796">
    <property type="interactions" value="44"/>
</dbReference>
<dbReference type="DIP" id="DIP-4915N"/>
<dbReference type="FunCoup" id="P38253">
    <property type="interactions" value="56"/>
</dbReference>
<dbReference type="IntAct" id="P38253">
    <property type="interactions" value="2"/>
</dbReference>
<dbReference type="PaxDb" id="4932-YBR090C"/>
<dbReference type="EnsemblFungi" id="YBR090C_mRNA">
    <property type="protein sequence ID" value="YBR090C"/>
    <property type="gene ID" value="YBR090C"/>
</dbReference>
<dbReference type="GeneID" id="852387"/>
<dbReference type="KEGG" id="sce:YBR090C"/>
<dbReference type="AGR" id="SGD:S000000294"/>
<dbReference type="SGD" id="S000000294">
    <property type="gene designation" value="YBR090C"/>
</dbReference>
<dbReference type="VEuPathDB" id="FungiDB:YBR090C"/>
<dbReference type="HOGENOM" id="CLU_2028537_0_0_1"/>
<dbReference type="InParanoid" id="P38253"/>
<dbReference type="BioCyc" id="YEAST:G3O-29056-MONOMER"/>
<dbReference type="BioGRID-ORCS" id="852387">
    <property type="hits" value="0 hits in 10 CRISPR screens"/>
</dbReference>
<dbReference type="ChiTaRS" id="YBR090C">
    <property type="organism name" value="yeast"/>
</dbReference>
<dbReference type="PRO" id="PR:P38253"/>
<dbReference type="Proteomes" id="UP000002311">
    <property type="component" value="Chromosome II"/>
</dbReference>
<dbReference type="RNAct" id="P38253">
    <property type="molecule type" value="protein"/>
</dbReference>
<dbReference type="GO" id="GO:0005737">
    <property type="term" value="C:cytoplasm"/>
    <property type="evidence" value="ECO:0007005"/>
    <property type="project" value="SGD"/>
</dbReference>
<dbReference type="GO" id="GO:0016020">
    <property type="term" value="C:membrane"/>
    <property type="evidence" value="ECO:0007669"/>
    <property type="project" value="UniProtKB-SubCell"/>
</dbReference>
<dbReference type="GO" id="GO:0005634">
    <property type="term" value="C:nucleus"/>
    <property type="evidence" value="ECO:0007005"/>
    <property type="project" value="SGD"/>
</dbReference>